<dbReference type="EC" id="2.8.1.8" evidence="1"/>
<dbReference type="EMBL" id="AM884176">
    <property type="protein sequence ID" value="CAP04258.1"/>
    <property type="molecule type" value="Genomic_DNA"/>
</dbReference>
<dbReference type="RefSeq" id="WP_009873898.1">
    <property type="nucleotide sequence ID" value="NC_010287.1"/>
</dbReference>
<dbReference type="RefSeq" id="YP_001654891.1">
    <property type="nucleotide sequence ID" value="NC_010287.1"/>
</dbReference>
<dbReference type="SMR" id="B0B8D2"/>
<dbReference type="KEGG" id="ctb:CTL0821"/>
<dbReference type="PATRIC" id="fig|471472.4.peg.880"/>
<dbReference type="HOGENOM" id="CLU_033144_2_1_0"/>
<dbReference type="UniPathway" id="UPA00538">
    <property type="reaction ID" value="UER00593"/>
</dbReference>
<dbReference type="Proteomes" id="UP001154402">
    <property type="component" value="Chromosome"/>
</dbReference>
<dbReference type="GO" id="GO:0005737">
    <property type="term" value="C:cytoplasm"/>
    <property type="evidence" value="ECO:0007669"/>
    <property type="project" value="UniProtKB-SubCell"/>
</dbReference>
<dbReference type="GO" id="GO:0051539">
    <property type="term" value="F:4 iron, 4 sulfur cluster binding"/>
    <property type="evidence" value="ECO:0007669"/>
    <property type="project" value="UniProtKB-UniRule"/>
</dbReference>
<dbReference type="GO" id="GO:0016992">
    <property type="term" value="F:lipoate synthase activity"/>
    <property type="evidence" value="ECO:0007669"/>
    <property type="project" value="UniProtKB-UniRule"/>
</dbReference>
<dbReference type="GO" id="GO:0046872">
    <property type="term" value="F:metal ion binding"/>
    <property type="evidence" value="ECO:0007669"/>
    <property type="project" value="UniProtKB-KW"/>
</dbReference>
<dbReference type="CDD" id="cd01335">
    <property type="entry name" value="Radical_SAM"/>
    <property type="match status" value="1"/>
</dbReference>
<dbReference type="FunFam" id="3.20.20.70:FF:000186">
    <property type="entry name" value="Lipoyl synthase"/>
    <property type="match status" value="1"/>
</dbReference>
<dbReference type="Gene3D" id="3.20.20.70">
    <property type="entry name" value="Aldolase class I"/>
    <property type="match status" value="1"/>
</dbReference>
<dbReference type="HAMAP" id="MF_00206">
    <property type="entry name" value="Lipoyl_synth"/>
    <property type="match status" value="1"/>
</dbReference>
<dbReference type="InterPro" id="IPR013785">
    <property type="entry name" value="Aldolase_TIM"/>
</dbReference>
<dbReference type="InterPro" id="IPR006638">
    <property type="entry name" value="Elp3/MiaA/NifB-like_rSAM"/>
</dbReference>
<dbReference type="InterPro" id="IPR031691">
    <property type="entry name" value="LIAS_N"/>
</dbReference>
<dbReference type="InterPro" id="IPR003698">
    <property type="entry name" value="Lipoyl_synth"/>
</dbReference>
<dbReference type="InterPro" id="IPR007197">
    <property type="entry name" value="rSAM"/>
</dbReference>
<dbReference type="NCBIfam" id="TIGR00510">
    <property type="entry name" value="lipA"/>
    <property type="match status" value="1"/>
</dbReference>
<dbReference type="NCBIfam" id="NF004019">
    <property type="entry name" value="PRK05481.1"/>
    <property type="match status" value="1"/>
</dbReference>
<dbReference type="NCBIfam" id="NF009544">
    <property type="entry name" value="PRK12928.1"/>
    <property type="match status" value="1"/>
</dbReference>
<dbReference type="PANTHER" id="PTHR10949">
    <property type="entry name" value="LIPOYL SYNTHASE"/>
    <property type="match status" value="1"/>
</dbReference>
<dbReference type="PANTHER" id="PTHR10949:SF0">
    <property type="entry name" value="LIPOYL SYNTHASE, MITOCHONDRIAL"/>
    <property type="match status" value="1"/>
</dbReference>
<dbReference type="Pfam" id="PF16881">
    <property type="entry name" value="LIAS_N"/>
    <property type="match status" value="1"/>
</dbReference>
<dbReference type="Pfam" id="PF04055">
    <property type="entry name" value="Radical_SAM"/>
    <property type="match status" value="1"/>
</dbReference>
<dbReference type="PIRSF" id="PIRSF005963">
    <property type="entry name" value="Lipoyl_synth"/>
    <property type="match status" value="1"/>
</dbReference>
<dbReference type="SFLD" id="SFLDF00271">
    <property type="entry name" value="lipoyl_synthase"/>
    <property type="match status" value="1"/>
</dbReference>
<dbReference type="SFLD" id="SFLDS00029">
    <property type="entry name" value="Radical_SAM"/>
    <property type="match status" value="1"/>
</dbReference>
<dbReference type="SMART" id="SM00729">
    <property type="entry name" value="Elp3"/>
    <property type="match status" value="1"/>
</dbReference>
<dbReference type="SUPFAM" id="SSF102114">
    <property type="entry name" value="Radical SAM enzymes"/>
    <property type="match status" value="1"/>
</dbReference>
<dbReference type="PROSITE" id="PS51918">
    <property type="entry name" value="RADICAL_SAM"/>
    <property type="match status" value="1"/>
</dbReference>
<evidence type="ECO:0000255" key="1">
    <source>
        <dbReference type="HAMAP-Rule" id="MF_00206"/>
    </source>
</evidence>
<evidence type="ECO:0000255" key="2">
    <source>
        <dbReference type="PROSITE-ProRule" id="PRU01266"/>
    </source>
</evidence>
<gene>
    <name evidence="1" type="primary">lipA</name>
    <name type="ordered locus">CTL0821</name>
</gene>
<comment type="function">
    <text evidence="1">Catalyzes the radical-mediated insertion of two sulfur atoms into the C-6 and C-8 positions of the octanoyl moiety bound to the lipoyl domains of lipoate-dependent enzymes, thereby converting the octanoylated domains into lipoylated derivatives.</text>
</comment>
<comment type="catalytic activity">
    <reaction evidence="1">
        <text>[[Fe-S] cluster scaffold protein carrying a second [4Fe-4S](2+) cluster] + N(6)-octanoyl-L-lysyl-[protein] + 2 oxidized [2Fe-2S]-[ferredoxin] + 2 S-adenosyl-L-methionine + 4 H(+) = [[Fe-S] cluster scaffold protein] + N(6)-[(R)-dihydrolipoyl]-L-lysyl-[protein] + 4 Fe(3+) + 2 hydrogen sulfide + 2 5'-deoxyadenosine + 2 L-methionine + 2 reduced [2Fe-2S]-[ferredoxin]</text>
        <dbReference type="Rhea" id="RHEA:16585"/>
        <dbReference type="Rhea" id="RHEA-COMP:9928"/>
        <dbReference type="Rhea" id="RHEA-COMP:10000"/>
        <dbReference type="Rhea" id="RHEA-COMP:10001"/>
        <dbReference type="Rhea" id="RHEA-COMP:10475"/>
        <dbReference type="Rhea" id="RHEA-COMP:14568"/>
        <dbReference type="Rhea" id="RHEA-COMP:14569"/>
        <dbReference type="ChEBI" id="CHEBI:15378"/>
        <dbReference type="ChEBI" id="CHEBI:17319"/>
        <dbReference type="ChEBI" id="CHEBI:29034"/>
        <dbReference type="ChEBI" id="CHEBI:29919"/>
        <dbReference type="ChEBI" id="CHEBI:33722"/>
        <dbReference type="ChEBI" id="CHEBI:33737"/>
        <dbReference type="ChEBI" id="CHEBI:33738"/>
        <dbReference type="ChEBI" id="CHEBI:57844"/>
        <dbReference type="ChEBI" id="CHEBI:59789"/>
        <dbReference type="ChEBI" id="CHEBI:78809"/>
        <dbReference type="ChEBI" id="CHEBI:83100"/>
        <dbReference type="EC" id="2.8.1.8"/>
    </reaction>
</comment>
<comment type="cofactor">
    <cofactor evidence="1">
        <name>[4Fe-4S] cluster</name>
        <dbReference type="ChEBI" id="CHEBI:49883"/>
    </cofactor>
    <text evidence="1">Binds 2 [4Fe-4S] clusters per subunit. One cluster is coordinated with 3 cysteines and an exchangeable S-adenosyl-L-methionine.</text>
</comment>
<comment type="pathway">
    <text evidence="1">Protein modification; protein lipoylation via endogenous pathway; protein N(6)-(lipoyl)lysine from octanoyl-[acyl-carrier-protein]: step 2/2.</text>
</comment>
<comment type="subcellular location">
    <subcellularLocation>
        <location evidence="1">Cytoplasm</location>
    </subcellularLocation>
</comment>
<comment type="similarity">
    <text evidence="1">Belongs to the radical SAM superfamily. Lipoyl synthase family.</text>
</comment>
<reference key="1">
    <citation type="journal article" date="2008" name="Genome Res.">
        <title>Chlamydia trachomatis: genome sequence analysis of lymphogranuloma venereum isolates.</title>
        <authorList>
            <person name="Thomson N.R."/>
            <person name="Holden M.T.G."/>
            <person name="Carder C."/>
            <person name="Lennard N."/>
            <person name="Lockey S.J."/>
            <person name="Marsh P."/>
            <person name="Skipp P."/>
            <person name="O'Connor C.D."/>
            <person name="Goodhead I."/>
            <person name="Norbertzcak H."/>
            <person name="Harris B."/>
            <person name="Ormond D."/>
            <person name="Rance R."/>
            <person name="Quail M.A."/>
            <person name="Parkhill J."/>
            <person name="Stephens R.S."/>
            <person name="Clarke I.N."/>
        </authorList>
    </citation>
    <scope>NUCLEOTIDE SEQUENCE [LARGE SCALE GENOMIC DNA]</scope>
    <source>
        <strain>ATCC VR-902B / DSM 19102 / 434/Bu</strain>
    </source>
</reference>
<protein>
    <recommendedName>
        <fullName evidence="1">Lipoyl synthase</fullName>
        <ecNumber evidence="1">2.8.1.8</ecNumber>
    </recommendedName>
    <alternativeName>
        <fullName evidence="1">Lip-syn</fullName>
        <shortName evidence="1">LS</shortName>
    </alternativeName>
    <alternativeName>
        <fullName evidence="1">Lipoate synthase</fullName>
    </alternativeName>
    <alternativeName>
        <fullName evidence="1">Lipoic acid synthase</fullName>
    </alternativeName>
    <alternativeName>
        <fullName evidence="1">Sulfur insertion protein LipA</fullName>
    </alternativeName>
</protein>
<feature type="chain" id="PRO_1000099594" description="Lipoyl synthase">
    <location>
        <begin position="1"/>
        <end position="311"/>
    </location>
</feature>
<feature type="domain" description="Radical SAM core" evidence="2">
    <location>
        <begin position="59"/>
        <end position="276"/>
    </location>
</feature>
<feature type="binding site" evidence="1">
    <location>
        <position position="47"/>
    </location>
    <ligand>
        <name>[4Fe-4S] cluster</name>
        <dbReference type="ChEBI" id="CHEBI:49883"/>
        <label>1</label>
    </ligand>
</feature>
<feature type="binding site" evidence="1">
    <location>
        <position position="52"/>
    </location>
    <ligand>
        <name>[4Fe-4S] cluster</name>
        <dbReference type="ChEBI" id="CHEBI:49883"/>
        <label>1</label>
    </ligand>
</feature>
<feature type="binding site" evidence="1">
    <location>
        <position position="58"/>
    </location>
    <ligand>
        <name>[4Fe-4S] cluster</name>
        <dbReference type="ChEBI" id="CHEBI:49883"/>
        <label>1</label>
    </ligand>
</feature>
<feature type="binding site" evidence="1">
    <location>
        <position position="73"/>
    </location>
    <ligand>
        <name>[4Fe-4S] cluster</name>
        <dbReference type="ChEBI" id="CHEBI:49883"/>
        <label>2</label>
        <note>4Fe-4S-S-AdoMet</note>
    </ligand>
</feature>
<feature type="binding site" evidence="1">
    <location>
        <position position="77"/>
    </location>
    <ligand>
        <name>[4Fe-4S] cluster</name>
        <dbReference type="ChEBI" id="CHEBI:49883"/>
        <label>2</label>
        <note>4Fe-4S-S-AdoMet</note>
    </ligand>
</feature>
<feature type="binding site" evidence="1">
    <location>
        <position position="80"/>
    </location>
    <ligand>
        <name>[4Fe-4S] cluster</name>
        <dbReference type="ChEBI" id="CHEBI:49883"/>
        <label>2</label>
        <note>4Fe-4S-S-AdoMet</note>
    </ligand>
</feature>
<feature type="binding site" evidence="1">
    <location>
        <position position="286"/>
    </location>
    <ligand>
        <name>[4Fe-4S] cluster</name>
        <dbReference type="ChEBI" id="CHEBI:49883"/>
        <label>1</label>
    </ligand>
</feature>
<keyword id="KW-0004">4Fe-4S</keyword>
<keyword id="KW-0963">Cytoplasm</keyword>
<keyword id="KW-0408">Iron</keyword>
<keyword id="KW-0411">Iron-sulfur</keyword>
<keyword id="KW-0479">Metal-binding</keyword>
<keyword id="KW-0949">S-adenosyl-L-methionine</keyword>
<keyword id="KW-0808">Transferase</keyword>
<sequence length="311" mass="34695">MTDSESPTPKKSIPARFPKWLRQKLPLGRVFAQTDNTIKNKGLPTVCEEASCPNRTHCWSRHTATYLALGDACTRRCGFCDIDFTRNPLPPDPEEGAKIAESAKALGLKHIVITMVSRDDLEDGGASALVHIIETLHTELPTATIEVLASDFEGNIAALHHLLDTHIAIYNHNVETVERLTPFVRHKATYRRSLMMLENAAKYLPNLMTKSGIMVGLGEQESEVKQTLKDLADHGVKIVTIGQYLRPSRRHIPVKSYVSPETFDYYRSVGESLGLFIYAGPFVRSSFNADSVFEAMRQRETSTSSLLPNKD</sequence>
<proteinExistence type="inferred from homology"/>
<organism>
    <name type="scientific">Chlamydia trachomatis serovar L2 (strain ATCC VR-902B / DSM 19102 / 434/Bu)</name>
    <dbReference type="NCBI Taxonomy" id="471472"/>
    <lineage>
        <taxon>Bacteria</taxon>
        <taxon>Pseudomonadati</taxon>
        <taxon>Chlamydiota</taxon>
        <taxon>Chlamydiia</taxon>
        <taxon>Chlamydiales</taxon>
        <taxon>Chlamydiaceae</taxon>
        <taxon>Chlamydia/Chlamydophila group</taxon>
        <taxon>Chlamydia</taxon>
    </lineage>
</organism>
<accession>B0B8D2</accession>
<name>LIPA_CHLT2</name>